<accession>B2IIK7</accession>
<comment type="function">
    <text evidence="1">Single strand-specific metallo-endoribonuclease involved in late-stage 70S ribosome quality control and in maturation of the 3' terminus of the 16S rRNA.</text>
</comment>
<comment type="cofactor">
    <cofactor evidence="1">
        <name>Zn(2+)</name>
        <dbReference type="ChEBI" id="CHEBI:29105"/>
    </cofactor>
    <text evidence="1">Binds 1 zinc ion.</text>
</comment>
<comment type="subcellular location">
    <subcellularLocation>
        <location evidence="1">Cytoplasm</location>
    </subcellularLocation>
</comment>
<comment type="similarity">
    <text evidence="1">Belongs to the endoribonuclease YbeY family.</text>
</comment>
<sequence>MVPLIDIAVESPRWTEAGNEGEDPLSLDALVEAAIGAAVARAGIALHAEAEVSLLFCDDAFIRGLNHQWRGLDKPTNVLSFPSDEDLEDARLLGDIIIAFETSAGEAKAEAKSLAAHVSHLVVHGFLHLIGYDHEEAEEAEEMERMEQVILADLGIADPYHGTAPVAPGGEAQVPNEALETSGKRQDHSLGEILPGGMSRRLAGS</sequence>
<evidence type="ECO:0000255" key="1">
    <source>
        <dbReference type="HAMAP-Rule" id="MF_00009"/>
    </source>
</evidence>
<evidence type="ECO:0000256" key="2">
    <source>
        <dbReference type="SAM" id="MobiDB-lite"/>
    </source>
</evidence>
<gene>
    <name evidence="1" type="primary">ybeY</name>
    <name type="ordered locus">Bind_1057</name>
</gene>
<protein>
    <recommendedName>
        <fullName evidence="1">Endoribonuclease YbeY</fullName>
        <ecNumber evidence="1">3.1.-.-</ecNumber>
    </recommendedName>
</protein>
<dbReference type="EC" id="3.1.-.-" evidence="1"/>
<dbReference type="EMBL" id="CP001016">
    <property type="protein sequence ID" value="ACB94700.1"/>
    <property type="molecule type" value="Genomic_DNA"/>
</dbReference>
<dbReference type="RefSeq" id="WP_012384057.1">
    <property type="nucleotide sequence ID" value="NC_010581.1"/>
</dbReference>
<dbReference type="SMR" id="B2IIK7"/>
<dbReference type="STRING" id="395963.Bind_1057"/>
<dbReference type="KEGG" id="bid:Bind_1057"/>
<dbReference type="eggNOG" id="COG0319">
    <property type="taxonomic scope" value="Bacteria"/>
</dbReference>
<dbReference type="HOGENOM" id="CLU_106710_0_0_5"/>
<dbReference type="OrthoDB" id="9807740at2"/>
<dbReference type="Proteomes" id="UP000001695">
    <property type="component" value="Chromosome"/>
</dbReference>
<dbReference type="GO" id="GO:0005737">
    <property type="term" value="C:cytoplasm"/>
    <property type="evidence" value="ECO:0007669"/>
    <property type="project" value="UniProtKB-SubCell"/>
</dbReference>
<dbReference type="GO" id="GO:0004222">
    <property type="term" value="F:metalloendopeptidase activity"/>
    <property type="evidence" value="ECO:0007669"/>
    <property type="project" value="InterPro"/>
</dbReference>
<dbReference type="GO" id="GO:0004521">
    <property type="term" value="F:RNA endonuclease activity"/>
    <property type="evidence" value="ECO:0007669"/>
    <property type="project" value="UniProtKB-UniRule"/>
</dbReference>
<dbReference type="GO" id="GO:0008270">
    <property type="term" value="F:zinc ion binding"/>
    <property type="evidence" value="ECO:0007669"/>
    <property type="project" value="UniProtKB-UniRule"/>
</dbReference>
<dbReference type="GO" id="GO:0006364">
    <property type="term" value="P:rRNA processing"/>
    <property type="evidence" value="ECO:0007669"/>
    <property type="project" value="UniProtKB-UniRule"/>
</dbReference>
<dbReference type="Gene3D" id="3.40.390.30">
    <property type="entry name" value="Metalloproteases ('zincins'), catalytic domain"/>
    <property type="match status" value="1"/>
</dbReference>
<dbReference type="HAMAP" id="MF_00009">
    <property type="entry name" value="Endoribonucl_YbeY"/>
    <property type="match status" value="1"/>
</dbReference>
<dbReference type="InterPro" id="IPR023091">
    <property type="entry name" value="MetalPrtase_cat_dom_sf_prd"/>
</dbReference>
<dbReference type="InterPro" id="IPR002036">
    <property type="entry name" value="YbeY"/>
</dbReference>
<dbReference type="InterPro" id="IPR020549">
    <property type="entry name" value="YbeY_CS"/>
</dbReference>
<dbReference type="NCBIfam" id="TIGR00043">
    <property type="entry name" value="rRNA maturation RNase YbeY"/>
    <property type="match status" value="1"/>
</dbReference>
<dbReference type="PANTHER" id="PTHR46986">
    <property type="entry name" value="ENDORIBONUCLEASE YBEY, CHLOROPLASTIC"/>
    <property type="match status" value="1"/>
</dbReference>
<dbReference type="PANTHER" id="PTHR46986:SF1">
    <property type="entry name" value="ENDORIBONUCLEASE YBEY, CHLOROPLASTIC"/>
    <property type="match status" value="1"/>
</dbReference>
<dbReference type="Pfam" id="PF02130">
    <property type="entry name" value="YbeY"/>
    <property type="match status" value="1"/>
</dbReference>
<dbReference type="SUPFAM" id="SSF55486">
    <property type="entry name" value="Metalloproteases ('zincins'), catalytic domain"/>
    <property type="match status" value="1"/>
</dbReference>
<dbReference type="PROSITE" id="PS01306">
    <property type="entry name" value="UPF0054"/>
    <property type="match status" value="1"/>
</dbReference>
<organism>
    <name type="scientific">Beijerinckia indica subsp. indica (strain ATCC 9039 / DSM 1715 / NCIMB 8712)</name>
    <dbReference type="NCBI Taxonomy" id="395963"/>
    <lineage>
        <taxon>Bacteria</taxon>
        <taxon>Pseudomonadati</taxon>
        <taxon>Pseudomonadota</taxon>
        <taxon>Alphaproteobacteria</taxon>
        <taxon>Hyphomicrobiales</taxon>
        <taxon>Beijerinckiaceae</taxon>
        <taxon>Beijerinckia</taxon>
    </lineage>
</organism>
<keyword id="KW-0963">Cytoplasm</keyword>
<keyword id="KW-0255">Endonuclease</keyword>
<keyword id="KW-0378">Hydrolase</keyword>
<keyword id="KW-0479">Metal-binding</keyword>
<keyword id="KW-0540">Nuclease</keyword>
<keyword id="KW-1185">Reference proteome</keyword>
<keyword id="KW-0690">Ribosome biogenesis</keyword>
<keyword id="KW-0698">rRNA processing</keyword>
<keyword id="KW-0862">Zinc</keyword>
<reference key="1">
    <citation type="journal article" date="2010" name="J. Bacteriol.">
        <title>Complete genome sequence of Beijerinckia indica subsp. indica.</title>
        <authorList>
            <person name="Tamas I."/>
            <person name="Dedysh S.N."/>
            <person name="Liesack W."/>
            <person name="Stott M.B."/>
            <person name="Alam M."/>
            <person name="Murrell J.C."/>
            <person name="Dunfield P.F."/>
        </authorList>
    </citation>
    <scope>NUCLEOTIDE SEQUENCE [LARGE SCALE GENOMIC DNA]</scope>
    <source>
        <strain>ATCC 9039 / DSM 1715 / NCIMB 8712</strain>
    </source>
</reference>
<feature type="chain" id="PRO_1000089151" description="Endoribonuclease YbeY">
    <location>
        <begin position="1"/>
        <end position="205"/>
    </location>
</feature>
<feature type="region of interest" description="Disordered" evidence="2">
    <location>
        <begin position="162"/>
        <end position="205"/>
    </location>
</feature>
<feature type="binding site" evidence="1">
    <location>
        <position position="124"/>
    </location>
    <ligand>
        <name>Zn(2+)</name>
        <dbReference type="ChEBI" id="CHEBI:29105"/>
        <note>catalytic</note>
    </ligand>
</feature>
<feature type="binding site" evidence="1">
    <location>
        <position position="128"/>
    </location>
    <ligand>
        <name>Zn(2+)</name>
        <dbReference type="ChEBI" id="CHEBI:29105"/>
        <note>catalytic</note>
    </ligand>
</feature>
<feature type="binding site" evidence="1">
    <location>
        <position position="134"/>
    </location>
    <ligand>
        <name>Zn(2+)</name>
        <dbReference type="ChEBI" id="CHEBI:29105"/>
        <note>catalytic</note>
    </ligand>
</feature>
<name>YBEY_BEII9</name>
<proteinExistence type="inferred from homology"/>